<sequence>MSIGTIVQCIGAVVDIQFPRDAMPKVYDALVLQDSGEASFAEKGLSFEVQQQLGDGVVRTIALGSSDGLRRGMPVSNTGAPISVPVGHGTLGRIMDVLGRPIDEAGPIAADEKRAIHQKAPKFDELSPSVDLLETGIKVIDLVCPFAKGGKVGLFGGAGVGKTVNMMELINNIAKQHSGLSVFAGVGERTREGNDFYHEMKDSNVLDKVAMVFGQMNEPPGNRLRVALTGLTMAERFRDEGRDILFFVDNIYRYTLAGTEVSALLGRMPSAVGYQPTLAEEMGKLQERITSTKTGSITSIQAVYVPADDLTDPSPATTFLHLDSTVVLSRDIAALGIYPAVDPLDSTSRQLDPQIVGTEHYEVARRVQQTLQRYKELRDIIAILGMDELSPEDKLAVGRARKIQRFLSQPFHVAEVFTGSPGKYVPLKETIRGFKMLVDGECDHLPEQAFYMVGSIDEAFEKAKKLQ</sequence>
<proteinExistence type="inferred from homology"/>
<gene>
    <name evidence="1" type="primary">atpD</name>
    <name type="ordered locus">RSc3317</name>
</gene>
<protein>
    <recommendedName>
        <fullName evidence="1">ATP synthase subunit beta</fullName>
        <ecNumber evidence="1">7.1.2.2</ecNumber>
    </recommendedName>
    <alternativeName>
        <fullName evidence="1">ATP synthase F1 sector subunit beta</fullName>
    </alternativeName>
    <alternativeName>
        <fullName evidence="1">F-ATPase subunit beta</fullName>
    </alternativeName>
</protein>
<organism>
    <name type="scientific">Ralstonia nicotianae (strain ATCC BAA-1114 / GMI1000)</name>
    <name type="common">Ralstonia solanacearum</name>
    <dbReference type="NCBI Taxonomy" id="267608"/>
    <lineage>
        <taxon>Bacteria</taxon>
        <taxon>Pseudomonadati</taxon>
        <taxon>Pseudomonadota</taxon>
        <taxon>Betaproteobacteria</taxon>
        <taxon>Burkholderiales</taxon>
        <taxon>Burkholderiaceae</taxon>
        <taxon>Ralstonia</taxon>
        <taxon>Ralstonia solanacearum species complex</taxon>
    </lineage>
</organism>
<reference key="1">
    <citation type="journal article" date="2002" name="Nature">
        <title>Genome sequence of the plant pathogen Ralstonia solanacearum.</title>
        <authorList>
            <person name="Salanoubat M."/>
            <person name="Genin S."/>
            <person name="Artiguenave F."/>
            <person name="Gouzy J."/>
            <person name="Mangenot S."/>
            <person name="Arlat M."/>
            <person name="Billault A."/>
            <person name="Brottier P."/>
            <person name="Camus J.-C."/>
            <person name="Cattolico L."/>
            <person name="Chandler M."/>
            <person name="Choisne N."/>
            <person name="Claudel-Renard C."/>
            <person name="Cunnac S."/>
            <person name="Demange N."/>
            <person name="Gaspin C."/>
            <person name="Lavie M."/>
            <person name="Moisan A."/>
            <person name="Robert C."/>
            <person name="Saurin W."/>
            <person name="Schiex T."/>
            <person name="Siguier P."/>
            <person name="Thebault P."/>
            <person name="Whalen M."/>
            <person name="Wincker P."/>
            <person name="Levy M."/>
            <person name="Weissenbach J."/>
            <person name="Boucher C.A."/>
        </authorList>
    </citation>
    <scope>NUCLEOTIDE SEQUENCE [LARGE SCALE GENOMIC DNA]</scope>
    <source>
        <strain>ATCC BAA-1114 / GMI1000</strain>
    </source>
</reference>
<dbReference type="EC" id="7.1.2.2" evidence="1"/>
<dbReference type="EMBL" id="AL646052">
    <property type="protein sequence ID" value="CAD17105.1"/>
    <property type="molecule type" value="Genomic_DNA"/>
</dbReference>
<dbReference type="RefSeq" id="WP_011003201.1">
    <property type="nucleotide sequence ID" value="NC_003295.1"/>
</dbReference>
<dbReference type="SMR" id="Q8XU76"/>
<dbReference type="STRING" id="267608.RSc3317"/>
<dbReference type="EnsemblBacteria" id="CAD17105">
    <property type="protein sequence ID" value="CAD17105"/>
    <property type="gene ID" value="RSc3317"/>
</dbReference>
<dbReference type="KEGG" id="rso:RSc3317"/>
<dbReference type="eggNOG" id="COG0055">
    <property type="taxonomic scope" value="Bacteria"/>
</dbReference>
<dbReference type="HOGENOM" id="CLU_022398_0_2_4"/>
<dbReference type="Proteomes" id="UP000001436">
    <property type="component" value="Chromosome"/>
</dbReference>
<dbReference type="GO" id="GO:0005886">
    <property type="term" value="C:plasma membrane"/>
    <property type="evidence" value="ECO:0007669"/>
    <property type="project" value="UniProtKB-SubCell"/>
</dbReference>
<dbReference type="GO" id="GO:0045259">
    <property type="term" value="C:proton-transporting ATP synthase complex"/>
    <property type="evidence" value="ECO:0007669"/>
    <property type="project" value="UniProtKB-KW"/>
</dbReference>
<dbReference type="GO" id="GO:0005524">
    <property type="term" value="F:ATP binding"/>
    <property type="evidence" value="ECO:0007669"/>
    <property type="project" value="UniProtKB-UniRule"/>
</dbReference>
<dbReference type="GO" id="GO:0016887">
    <property type="term" value="F:ATP hydrolysis activity"/>
    <property type="evidence" value="ECO:0007669"/>
    <property type="project" value="InterPro"/>
</dbReference>
<dbReference type="GO" id="GO:0046933">
    <property type="term" value="F:proton-transporting ATP synthase activity, rotational mechanism"/>
    <property type="evidence" value="ECO:0007669"/>
    <property type="project" value="UniProtKB-UniRule"/>
</dbReference>
<dbReference type="CDD" id="cd18110">
    <property type="entry name" value="ATP-synt_F1_beta_C"/>
    <property type="match status" value="1"/>
</dbReference>
<dbReference type="CDD" id="cd18115">
    <property type="entry name" value="ATP-synt_F1_beta_N"/>
    <property type="match status" value="1"/>
</dbReference>
<dbReference type="CDD" id="cd01133">
    <property type="entry name" value="F1-ATPase_beta_CD"/>
    <property type="match status" value="1"/>
</dbReference>
<dbReference type="FunFam" id="1.10.1140.10:FF:000001">
    <property type="entry name" value="ATP synthase subunit beta"/>
    <property type="match status" value="1"/>
</dbReference>
<dbReference type="FunFam" id="3.40.50.300:FF:000004">
    <property type="entry name" value="ATP synthase subunit beta"/>
    <property type="match status" value="1"/>
</dbReference>
<dbReference type="Gene3D" id="2.40.10.170">
    <property type="match status" value="1"/>
</dbReference>
<dbReference type="Gene3D" id="1.10.1140.10">
    <property type="entry name" value="Bovine Mitochondrial F1-atpase, Atp Synthase Beta Chain, Chain D, domain 3"/>
    <property type="match status" value="1"/>
</dbReference>
<dbReference type="Gene3D" id="3.40.50.300">
    <property type="entry name" value="P-loop containing nucleotide triphosphate hydrolases"/>
    <property type="match status" value="1"/>
</dbReference>
<dbReference type="HAMAP" id="MF_01347">
    <property type="entry name" value="ATP_synth_beta_bact"/>
    <property type="match status" value="1"/>
</dbReference>
<dbReference type="InterPro" id="IPR003593">
    <property type="entry name" value="AAA+_ATPase"/>
</dbReference>
<dbReference type="InterPro" id="IPR055190">
    <property type="entry name" value="ATP-synt_VA_C"/>
</dbReference>
<dbReference type="InterPro" id="IPR005722">
    <property type="entry name" value="ATP_synth_F1_bsu"/>
</dbReference>
<dbReference type="InterPro" id="IPR020003">
    <property type="entry name" value="ATPase_a/bsu_AS"/>
</dbReference>
<dbReference type="InterPro" id="IPR050053">
    <property type="entry name" value="ATPase_alpha/beta_chains"/>
</dbReference>
<dbReference type="InterPro" id="IPR004100">
    <property type="entry name" value="ATPase_F1/V1/A1_a/bsu_N"/>
</dbReference>
<dbReference type="InterPro" id="IPR036121">
    <property type="entry name" value="ATPase_F1/V1/A1_a/bsu_N_sf"/>
</dbReference>
<dbReference type="InterPro" id="IPR000194">
    <property type="entry name" value="ATPase_F1/V1/A1_a/bsu_nucl-bd"/>
</dbReference>
<dbReference type="InterPro" id="IPR024034">
    <property type="entry name" value="ATPase_F1/V1_b/a_C"/>
</dbReference>
<dbReference type="InterPro" id="IPR027417">
    <property type="entry name" value="P-loop_NTPase"/>
</dbReference>
<dbReference type="NCBIfam" id="TIGR01039">
    <property type="entry name" value="atpD"/>
    <property type="match status" value="1"/>
</dbReference>
<dbReference type="PANTHER" id="PTHR15184">
    <property type="entry name" value="ATP SYNTHASE"/>
    <property type="match status" value="1"/>
</dbReference>
<dbReference type="PANTHER" id="PTHR15184:SF71">
    <property type="entry name" value="ATP SYNTHASE SUBUNIT BETA, MITOCHONDRIAL"/>
    <property type="match status" value="1"/>
</dbReference>
<dbReference type="Pfam" id="PF00006">
    <property type="entry name" value="ATP-synt_ab"/>
    <property type="match status" value="1"/>
</dbReference>
<dbReference type="Pfam" id="PF02874">
    <property type="entry name" value="ATP-synt_ab_N"/>
    <property type="match status" value="1"/>
</dbReference>
<dbReference type="Pfam" id="PF22919">
    <property type="entry name" value="ATP-synt_VA_C"/>
    <property type="match status" value="1"/>
</dbReference>
<dbReference type="SMART" id="SM00382">
    <property type="entry name" value="AAA"/>
    <property type="match status" value="1"/>
</dbReference>
<dbReference type="SUPFAM" id="SSF47917">
    <property type="entry name" value="C-terminal domain of alpha and beta subunits of F1 ATP synthase"/>
    <property type="match status" value="1"/>
</dbReference>
<dbReference type="SUPFAM" id="SSF50615">
    <property type="entry name" value="N-terminal domain of alpha and beta subunits of F1 ATP synthase"/>
    <property type="match status" value="1"/>
</dbReference>
<dbReference type="SUPFAM" id="SSF52540">
    <property type="entry name" value="P-loop containing nucleoside triphosphate hydrolases"/>
    <property type="match status" value="1"/>
</dbReference>
<dbReference type="PROSITE" id="PS00152">
    <property type="entry name" value="ATPASE_ALPHA_BETA"/>
    <property type="match status" value="1"/>
</dbReference>
<name>ATPB_RALN1</name>
<accession>Q8XU76</accession>
<feature type="chain" id="PRO_0000254349" description="ATP synthase subunit beta">
    <location>
        <begin position="1"/>
        <end position="467"/>
    </location>
</feature>
<feature type="binding site" evidence="1">
    <location>
        <begin position="156"/>
        <end position="163"/>
    </location>
    <ligand>
        <name>ATP</name>
        <dbReference type="ChEBI" id="CHEBI:30616"/>
    </ligand>
</feature>
<keyword id="KW-0066">ATP synthesis</keyword>
<keyword id="KW-0067">ATP-binding</keyword>
<keyword id="KW-0997">Cell inner membrane</keyword>
<keyword id="KW-1003">Cell membrane</keyword>
<keyword id="KW-0139">CF(1)</keyword>
<keyword id="KW-0375">Hydrogen ion transport</keyword>
<keyword id="KW-0406">Ion transport</keyword>
<keyword id="KW-0472">Membrane</keyword>
<keyword id="KW-0547">Nucleotide-binding</keyword>
<keyword id="KW-1185">Reference proteome</keyword>
<keyword id="KW-1278">Translocase</keyword>
<keyword id="KW-0813">Transport</keyword>
<evidence type="ECO:0000255" key="1">
    <source>
        <dbReference type="HAMAP-Rule" id="MF_01347"/>
    </source>
</evidence>
<comment type="function">
    <text evidence="1">Produces ATP from ADP in the presence of a proton gradient across the membrane. The catalytic sites are hosted primarily by the beta subunits.</text>
</comment>
<comment type="catalytic activity">
    <reaction evidence="1">
        <text>ATP + H2O + 4 H(+)(in) = ADP + phosphate + 5 H(+)(out)</text>
        <dbReference type="Rhea" id="RHEA:57720"/>
        <dbReference type="ChEBI" id="CHEBI:15377"/>
        <dbReference type="ChEBI" id="CHEBI:15378"/>
        <dbReference type="ChEBI" id="CHEBI:30616"/>
        <dbReference type="ChEBI" id="CHEBI:43474"/>
        <dbReference type="ChEBI" id="CHEBI:456216"/>
        <dbReference type="EC" id="7.1.2.2"/>
    </reaction>
</comment>
<comment type="subunit">
    <text evidence="1">F-type ATPases have 2 components, CF(1) - the catalytic core - and CF(0) - the membrane proton channel. CF(1) has five subunits: alpha(3), beta(3), gamma(1), delta(1), epsilon(1). CF(0) has three main subunits: a(1), b(2) and c(9-12). The alpha and beta chains form an alternating ring which encloses part of the gamma chain. CF(1) is attached to CF(0) by a central stalk formed by the gamma and epsilon chains, while a peripheral stalk is formed by the delta and b chains.</text>
</comment>
<comment type="subcellular location">
    <subcellularLocation>
        <location evidence="1">Cell inner membrane</location>
        <topology evidence="1">Peripheral membrane protein</topology>
    </subcellularLocation>
</comment>
<comment type="similarity">
    <text evidence="1">Belongs to the ATPase alpha/beta chains family.</text>
</comment>